<comment type="function">
    <text evidence="1">Functions as a component of the transcription regulatory histone acetylation (HAT) complex SAGA. At the promoters, SAGA is required for recruitment of the basal transcription machinery. It influences RNA polymerase II transcriptional activity through different activities such as TBP interaction and promoter selectivity, interaction with transcription activators, and chromatin modification through histone acetylation and deubiquitination. SAGA acetylates nucleosomal histone H3 to some extent (to form H3K9ac, H3K14ac, H3K18ac and H3K23ac). SAGA interacts with DNA via upstream activating sequences (UASs). Involved in transcriptional regulation of a subset of SAGA-regulated genes. Within the SAGA complex, participates in a subcomplex, that specifically deubiquitinates histones H2B.</text>
</comment>
<comment type="subunit">
    <text evidence="1">Component of the 1.8 MDa SAGA transcription coactivator-HAT complex. SAGA is built of 5 distinct domains with specialized functions. Within the SAGA complex, SUS1, SGF11, SGF73 and UBP8 form an additional subcomplex of SAGA called the DUB module (deubiquitination module). Interacts directly with SGF73, SUS1 and UBP8.</text>
</comment>
<comment type="subcellular location">
    <subcellularLocation>
        <location evidence="1">Nucleus</location>
    </subcellularLocation>
</comment>
<comment type="domain">
    <text evidence="1">The long N-terminal helix forms part of the 'assembly lobe' of the SAGA deubiquitination module.</text>
</comment>
<comment type="domain">
    <text evidence="1">The C-terminal SGF11-type zinc-finger domain together with the C-terminal catalytic domain of UBP8 forms the 'catalytic lobe' of the SAGA deubiquitination module.</text>
</comment>
<comment type="similarity">
    <text evidence="1">Belongs to the SGF11 family.</text>
</comment>
<keyword id="KW-0010">Activator</keyword>
<keyword id="KW-0156">Chromatin regulator</keyword>
<keyword id="KW-0479">Metal-binding</keyword>
<keyword id="KW-0539">Nucleus</keyword>
<keyword id="KW-0804">Transcription</keyword>
<keyword id="KW-0805">Transcription regulation</keyword>
<keyword id="KW-0862">Zinc</keyword>
<keyword id="KW-0863">Zinc-finger</keyword>
<sequence length="99" mass="11333">MTEETITIDSISNGILNNLLTTLIQDIVARETTQQQLLKTRYPDLRSYYFYPNGSLDINGLQKQQESSQYIHCENCGRDVSANRLAAHLQRCLSRGARR</sequence>
<evidence type="ECO:0000255" key="1">
    <source>
        <dbReference type="HAMAP-Rule" id="MF_03047"/>
    </source>
</evidence>
<reference key="1">
    <citation type="submission" date="2005-03" db="EMBL/GenBank/DDBJ databases">
        <title>Annotation of the Saccharomyces cerevisiae RM11-1a genome.</title>
        <authorList>
            <consortium name="The Broad Institute Genome Sequencing Platform"/>
            <person name="Birren B.W."/>
            <person name="Lander E.S."/>
            <person name="Galagan J.E."/>
            <person name="Nusbaum C."/>
            <person name="Devon K."/>
            <person name="Cuomo C."/>
            <person name="Jaffe D.B."/>
            <person name="Butler J."/>
            <person name="Alvarez P."/>
            <person name="Gnerre S."/>
            <person name="Grabherr M."/>
            <person name="Kleber M."/>
            <person name="Mauceli E.W."/>
            <person name="Brockman W."/>
            <person name="MacCallum I.A."/>
            <person name="Rounsley S."/>
            <person name="Young S.K."/>
            <person name="LaButti K."/>
            <person name="Pushparaj V."/>
            <person name="DeCaprio D."/>
            <person name="Crawford M."/>
            <person name="Koehrsen M."/>
            <person name="Engels R."/>
            <person name="Montgomery P."/>
            <person name="Pearson M."/>
            <person name="Howarth C."/>
            <person name="Larson L."/>
            <person name="Luoma S."/>
            <person name="White J."/>
            <person name="O'Leary S."/>
            <person name="Kodira C.D."/>
            <person name="Zeng Q."/>
            <person name="Yandava C."/>
            <person name="Alvarado L."/>
            <person name="Pratt S."/>
            <person name="Kruglyak L."/>
        </authorList>
    </citation>
    <scope>NUCLEOTIDE SEQUENCE [LARGE SCALE GENOMIC DNA]</scope>
    <source>
        <strain>RM11-1a</strain>
    </source>
</reference>
<accession>B3LL20</accession>
<gene>
    <name evidence="1" type="primary">SGF11</name>
    <name type="ORF">SCRG_02445</name>
</gene>
<feature type="chain" id="PRO_0000367544" description="SAGA-associated factor 11">
    <location>
        <begin position="1"/>
        <end position="99"/>
    </location>
</feature>
<feature type="zinc finger region" description="SGF11-type" evidence="1">
    <location>
        <begin position="71"/>
        <end position="92"/>
    </location>
</feature>
<proteinExistence type="inferred from homology"/>
<protein>
    <recommendedName>
        <fullName evidence="1">SAGA-associated factor 11</fullName>
    </recommendedName>
</protein>
<dbReference type="EMBL" id="CH408046">
    <property type="protein sequence ID" value="EDV11168.1"/>
    <property type="molecule type" value="Genomic_DNA"/>
</dbReference>
<dbReference type="BMRB" id="B3LL20"/>
<dbReference type="SMR" id="B3LL20"/>
<dbReference type="HOGENOM" id="CLU_2320099_0_0_1"/>
<dbReference type="OrthoDB" id="21597at4893"/>
<dbReference type="Proteomes" id="UP000008335">
    <property type="component" value="Unassembled WGS sequence"/>
</dbReference>
<dbReference type="GO" id="GO:0071819">
    <property type="term" value="C:DUBm complex"/>
    <property type="evidence" value="ECO:0007669"/>
    <property type="project" value="UniProtKB-UniRule"/>
</dbReference>
<dbReference type="GO" id="GO:0000124">
    <property type="term" value="C:SAGA complex"/>
    <property type="evidence" value="ECO:0007669"/>
    <property type="project" value="UniProtKB-UniRule"/>
</dbReference>
<dbReference type="GO" id="GO:0003713">
    <property type="term" value="F:transcription coactivator activity"/>
    <property type="evidence" value="ECO:0007669"/>
    <property type="project" value="UniProtKB-UniRule"/>
</dbReference>
<dbReference type="GO" id="GO:0008270">
    <property type="term" value="F:zinc ion binding"/>
    <property type="evidence" value="ECO:0007669"/>
    <property type="project" value="UniProtKB-UniRule"/>
</dbReference>
<dbReference type="GO" id="GO:0006325">
    <property type="term" value="P:chromatin organization"/>
    <property type="evidence" value="ECO:0007669"/>
    <property type="project" value="UniProtKB-KW"/>
</dbReference>
<dbReference type="FunFam" id="3.30.160.60:FF:000118">
    <property type="entry name" value="Ataxin-7-like protein 3"/>
    <property type="match status" value="1"/>
</dbReference>
<dbReference type="FunFam" id="1.10.287.210:FF:000006">
    <property type="entry name" value="SAGA-associated factor 11"/>
    <property type="match status" value="1"/>
</dbReference>
<dbReference type="Gene3D" id="1.10.287.210">
    <property type="match status" value="1"/>
</dbReference>
<dbReference type="Gene3D" id="3.30.160.60">
    <property type="entry name" value="Classic Zinc Finger"/>
    <property type="match status" value="1"/>
</dbReference>
<dbReference type="HAMAP" id="MF_03047">
    <property type="entry name" value="Sgf11"/>
    <property type="match status" value="1"/>
</dbReference>
<dbReference type="InterPro" id="IPR013246">
    <property type="entry name" value="SAGA_su_Sgf11"/>
</dbReference>
<dbReference type="InterPro" id="IPR041216">
    <property type="entry name" value="Sgf11_N"/>
</dbReference>
<dbReference type="Pfam" id="PF08209">
    <property type="entry name" value="Sgf11"/>
    <property type="match status" value="1"/>
</dbReference>
<dbReference type="Pfam" id="PF18519">
    <property type="entry name" value="Sgf11_N"/>
    <property type="match status" value="1"/>
</dbReference>
<organism>
    <name type="scientific">Saccharomyces cerevisiae (strain RM11-1a)</name>
    <name type="common">Baker's yeast</name>
    <dbReference type="NCBI Taxonomy" id="285006"/>
    <lineage>
        <taxon>Eukaryota</taxon>
        <taxon>Fungi</taxon>
        <taxon>Dikarya</taxon>
        <taxon>Ascomycota</taxon>
        <taxon>Saccharomycotina</taxon>
        <taxon>Saccharomycetes</taxon>
        <taxon>Saccharomycetales</taxon>
        <taxon>Saccharomycetaceae</taxon>
        <taxon>Saccharomyces</taxon>
    </lineage>
</organism>
<name>SGF11_YEAS1</name>